<name>KPTA_LACP3</name>
<keyword id="KW-0520">NAD</keyword>
<keyword id="KW-1185">Reference proteome</keyword>
<keyword id="KW-0808">Transferase</keyword>
<sequence length="188" mass="21613">MMDKRLVKISKTLSMLLRHHPEKLGLVLDQYGRTDWKTLVRRFNAHYQMHLDRQVLQAIMAQSTKKRFALEGTTIRAVYGHSVPVMPLTPATEPPQWLYHGTSHQAATVIAKEGLLPMNRDFVHLSEDVATARQVGARHDTHPVIYRIAARDAAKNGILFYPTSSRVWLVSELPARFLHHLTSYFRRP</sequence>
<comment type="function">
    <text evidence="1">Removes the 2'-phosphate from RNA via an intermediate in which the phosphate is ADP-ribosylated by NAD followed by a presumed transesterification to release the RNA and generate ADP-ribose 1''-2''-cyclic phosphate (APPR&gt;P). May function as an ADP-ribosylase.</text>
</comment>
<comment type="similarity">
    <text evidence="1">Belongs to the KptA/TPT1 family.</text>
</comment>
<organism>
    <name type="scientific">Lacticaseibacillus paracasei (strain ATCC 334 / BCRC 17002 / CCUG 31169 / CIP 107868 / KCTC 3260 / NRRL B-441)</name>
    <name type="common">Lactobacillus paracasei</name>
    <dbReference type="NCBI Taxonomy" id="321967"/>
    <lineage>
        <taxon>Bacteria</taxon>
        <taxon>Bacillati</taxon>
        <taxon>Bacillota</taxon>
        <taxon>Bacilli</taxon>
        <taxon>Lactobacillales</taxon>
        <taxon>Lactobacillaceae</taxon>
        <taxon>Lacticaseibacillus</taxon>
    </lineage>
</organism>
<proteinExistence type="inferred from homology"/>
<gene>
    <name evidence="1" type="primary">kptA</name>
    <name type="ordered locus">LSEI_1867</name>
</gene>
<protein>
    <recommendedName>
        <fullName evidence="1">Probable RNA 2'-phosphotransferase</fullName>
        <ecNumber evidence="1">2.7.1.-</ecNumber>
    </recommendedName>
</protein>
<feature type="chain" id="PRO_1000059306" description="Probable RNA 2'-phosphotransferase">
    <location>
        <begin position="1"/>
        <end position="188"/>
    </location>
</feature>
<reference key="1">
    <citation type="journal article" date="2006" name="Proc. Natl. Acad. Sci. U.S.A.">
        <title>Comparative genomics of the lactic acid bacteria.</title>
        <authorList>
            <person name="Makarova K.S."/>
            <person name="Slesarev A."/>
            <person name="Wolf Y.I."/>
            <person name="Sorokin A."/>
            <person name="Mirkin B."/>
            <person name="Koonin E.V."/>
            <person name="Pavlov A."/>
            <person name="Pavlova N."/>
            <person name="Karamychev V."/>
            <person name="Polouchine N."/>
            <person name="Shakhova V."/>
            <person name="Grigoriev I."/>
            <person name="Lou Y."/>
            <person name="Rohksar D."/>
            <person name="Lucas S."/>
            <person name="Huang K."/>
            <person name="Goodstein D.M."/>
            <person name="Hawkins T."/>
            <person name="Plengvidhya V."/>
            <person name="Welker D."/>
            <person name="Hughes J."/>
            <person name="Goh Y."/>
            <person name="Benson A."/>
            <person name="Baldwin K."/>
            <person name="Lee J.-H."/>
            <person name="Diaz-Muniz I."/>
            <person name="Dosti B."/>
            <person name="Smeianov V."/>
            <person name="Wechter W."/>
            <person name="Barabote R."/>
            <person name="Lorca G."/>
            <person name="Altermann E."/>
            <person name="Barrangou R."/>
            <person name="Ganesan B."/>
            <person name="Xie Y."/>
            <person name="Rawsthorne H."/>
            <person name="Tamir D."/>
            <person name="Parker C."/>
            <person name="Breidt F."/>
            <person name="Broadbent J.R."/>
            <person name="Hutkins R."/>
            <person name="O'Sullivan D."/>
            <person name="Steele J."/>
            <person name="Unlu G."/>
            <person name="Saier M.H. Jr."/>
            <person name="Klaenhammer T."/>
            <person name="Richardson P."/>
            <person name="Kozyavkin S."/>
            <person name="Weimer B.C."/>
            <person name="Mills D.A."/>
        </authorList>
    </citation>
    <scope>NUCLEOTIDE SEQUENCE [LARGE SCALE GENOMIC DNA]</scope>
    <source>
        <strain>ATCC 334 / BCRC 17002 / CCUG 31169 / CIP 107868 / KCTC 3260 / NRRL B-441</strain>
    </source>
</reference>
<dbReference type="EC" id="2.7.1.-" evidence="1"/>
<dbReference type="EMBL" id="CP000423">
    <property type="protein sequence ID" value="ABJ70626.1"/>
    <property type="molecule type" value="Genomic_DNA"/>
</dbReference>
<dbReference type="RefSeq" id="WP_003566199.1">
    <property type="nucleotide sequence ID" value="NC_008526.1"/>
</dbReference>
<dbReference type="RefSeq" id="YP_807068.1">
    <property type="nucleotide sequence ID" value="NC_008526.1"/>
</dbReference>
<dbReference type="SMR" id="Q037J6"/>
<dbReference type="STRING" id="321967.LSEI_1867"/>
<dbReference type="PaxDb" id="321967-LSEI_1867"/>
<dbReference type="KEGG" id="lca:LSEI_1867"/>
<dbReference type="PATRIC" id="fig|321967.11.peg.1841"/>
<dbReference type="HOGENOM" id="CLU_052998_4_0_9"/>
<dbReference type="Proteomes" id="UP000001651">
    <property type="component" value="Chromosome"/>
</dbReference>
<dbReference type="GO" id="GO:0003950">
    <property type="term" value="F:NAD+ poly-ADP-ribosyltransferase activity"/>
    <property type="evidence" value="ECO:0007669"/>
    <property type="project" value="InterPro"/>
</dbReference>
<dbReference type="GO" id="GO:0000215">
    <property type="term" value="F:tRNA 2'-phosphotransferase activity"/>
    <property type="evidence" value="ECO:0007669"/>
    <property type="project" value="TreeGrafter"/>
</dbReference>
<dbReference type="GO" id="GO:0006388">
    <property type="term" value="P:tRNA splicing, via endonucleolytic cleavage and ligation"/>
    <property type="evidence" value="ECO:0007669"/>
    <property type="project" value="UniProtKB-UniRule"/>
</dbReference>
<dbReference type="Gene3D" id="3.20.170.30">
    <property type="match status" value="1"/>
</dbReference>
<dbReference type="Gene3D" id="1.10.10.970">
    <property type="entry name" value="RNA 2'-phosphotransferase, Tpt1/KptA family, N-terminal domain"/>
    <property type="match status" value="1"/>
</dbReference>
<dbReference type="HAMAP" id="MF_00299">
    <property type="entry name" value="KptA"/>
    <property type="match status" value="1"/>
</dbReference>
<dbReference type="InterPro" id="IPR002745">
    <property type="entry name" value="Ptrans_KptA/Tpt1"/>
</dbReference>
<dbReference type="InterPro" id="IPR042081">
    <property type="entry name" value="RNA_2'-PTrans_C"/>
</dbReference>
<dbReference type="InterPro" id="IPR022928">
    <property type="entry name" value="RNA_2'-PTrans_KptA"/>
</dbReference>
<dbReference type="InterPro" id="IPR042080">
    <property type="entry name" value="RNA_2'-PTrans_N"/>
</dbReference>
<dbReference type="PANTHER" id="PTHR12684">
    <property type="entry name" value="PUTATIVE PHOSPHOTRANSFERASE"/>
    <property type="match status" value="1"/>
</dbReference>
<dbReference type="PANTHER" id="PTHR12684:SF2">
    <property type="entry name" value="TRNA 2'-PHOSPHOTRANSFERASE 1"/>
    <property type="match status" value="1"/>
</dbReference>
<dbReference type="Pfam" id="PF01885">
    <property type="entry name" value="PTS_2-RNA"/>
    <property type="match status" value="1"/>
</dbReference>
<dbReference type="SUPFAM" id="SSF56399">
    <property type="entry name" value="ADP-ribosylation"/>
    <property type="match status" value="1"/>
</dbReference>
<evidence type="ECO:0000255" key="1">
    <source>
        <dbReference type="HAMAP-Rule" id="MF_00299"/>
    </source>
</evidence>
<accession>Q037J6</accession>